<evidence type="ECO:0007829" key="1">
    <source>
        <dbReference type="PDB" id="1NJH"/>
    </source>
</evidence>
<proteinExistence type="evidence at protein level"/>
<accession>O31858</accession>
<accession>Q7BV98</accession>
<keyword id="KW-0002">3D-structure</keyword>
<keyword id="KW-1185">Reference proteome</keyword>
<name>YOJF_BACSU</name>
<gene>
    <name type="primary">yojF</name>
    <name type="ordered locus">BSU19470</name>
</gene>
<organism>
    <name type="scientific">Bacillus subtilis (strain 168)</name>
    <dbReference type="NCBI Taxonomy" id="224308"/>
    <lineage>
        <taxon>Bacteria</taxon>
        <taxon>Bacillati</taxon>
        <taxon>Bacillota</taxon>
        <taxon>Bacilli</taxon>
        <taxon>Bacillales</taxon>
        <taxon>Bacillaceae</taxon>
        <taxon>Bacillus</taxon>
    </lineage>
</organism>
<feature type="chain" id="PRO_0000360631" description="Uncharacterized protein YojF">
    <location>
        <begin position="1"/>
        <end position="116"/>
    </location>
</feature>
<feature type="helix" evidence="1">
    <location>
        <begin position="6"/>
        <end position="15"/>
    </location>
</feature>
<feature type="turn" evidence="1">
    <location>
        <begin position="16"/>
        <end position="18"/>
    </location>
</feature>
<feature type="strand" evidence="1">
    <location>
        <begin position="21"/>
        <end position="29"/>
    </location>
</feature>
<feature type="strand" evidence="1">
    <location>
        <begin position="42"/>
        <end position="52"/>
    </location>
</feature>
<feature type="strand" evidence="1">
    <location>
        <begin position="54"/>
        <end position="81"/>
    </location>
</feature>
<feature type="strand" evidence="1">
    <location>
        <begin position="83"/>
        <end position="86"/>
    </location>
</feature>
<feature type="strand" evidence="1">
    <location>
        <begin position="92"/>
        <end position="98"/>
    </location>
</feature>
<feature type="turn" evidence="1">
    <location>
        <begin position="99"/>
        <end position="102"/>
    </location>
</feature>
<feature type="strand" evidence="1">
    <location>
        <begin position="103"/>
        <end position="112"/>
    </location>
</feature>
<reference key="1">
    <citation type="journal article" date="1998" name="DNA Res.">
        <title>Sequence analysis of the Bacillus subtilis 168 chromosome region between the sspC and odhA loci (184 degrees-180 degrees).</title>
        <authorList>
            <person name="Ghim S.-Y."/>
            <person name="Choi S.-K."/>
            <person name="Shin B.-S."/>
            <person name="Jeong Y.-M."/>
            <person name="Sorokin A."/>
            <person name="Ehrlich S.D."/>
            <person name="Park S.-H."/>
        </authorList>
    </citation>
    <scope>NUCLEOTIDE SEQUENCE [GENOMIC DNA]</scope>
    <source>
        <strain>168</strain>
    </source>
</reference>
<reference key="2">
    <citation type="journal article" date="1997" name="Nature">
        <title>The complete genome sequence of the Gram-positive bacterium Bacillus subtilis.</title>
        <authorList>
            <person name="Kunst F."/>
            <person name="Ogasawara N."/>
            <person name="Moszer I."/>
            <person name="Albertini A.M."/>
            <person name="Alloni G."/>
            <person name="Azevedo V."/>
            <person name="Bertero M.G."/>
            <person name="Bessieres P."/>
            <person name="Bolotin A."/>
            <person name="Borchert S."/>
            <person name="Borriss R."/>
            <person name="Boursier L."/>
            <person name="Brans A."/>
            <person name="Braun M."/>
            <person name="Brignell S.C."/>
            <person name="Bron S."/>
            <person name="Brouillet S."/>
            <person name="Bruschi C.V."/>
            <person name="Caldwell B."/>
            <person name="Capuano V."/>
            <person name="Carter N.M."/>
            <person name="Choi S.-K."/>
            <person name="Codani J.-J."/>
            <person name="Connerton I.F."/>
            <person name="Cummings N.J."/>
            <person name="Daniel R.A."/>
            <person name="Denizot F."/>
            <person name="Devine K.M."/>
            <person name="Duesterhoeft A."/>
            <person name="Ehrlich S.D."/>
            <person name="Emmerson P.T."/>
            <person name="Entian K.-D."/>
            <person name="Errington J."/>
            <person name="Fabret C."/>
            <person name="Ferrari E."/>
            <person name="Foulger D."/>
            <person name="Fritz C."/>
            <person name="Fujita M."/>
            <person name="Fujita Y."/>
            <person name="Fuma S."/>
            <person name="Galizzi A."/>
            <person name="Galleron N."/>
            <person name="Ghim S.-Y."/>
            <person name="Glaser P."/>
            <person name="Goffeau A."/>
            <person name="Golightly E.J."/>
            <person name="Grandi G."/>
            <person name="Guiseppi G."/>
            <person name="Guy B.J."/>
            <person name="Haga K."/>
            <person name="Haiech J."/>
            <person name="Harwood C.R."/>
            <person name="Henaut A."/>
            <person name="Hilbert H."/>
            <person name="Holsappel S."/>
            <person name="Hosono S."/>
            <person name="Hullo M.-F."/>
            <person name="Itaya M."/>
            <person name="Jones L.-M."/>
            <person name="Joris B."/>
            <person name="Karamata D."/>
            <person name="Kasahara Y."/>
            <person name="Klaerr-Blanchard M."/>
            <person name="Klein C."/>
            <person name="Kobayashi Y."/>
            <person name="Koetter P."/>
            <person name="Koningstein G."/>
            <person name="Krogh S."/>
            <person name="Kumano M."/>
            <person name="Kurita K."/>
            <person name="Lapidus A."/>
            <person name="Lardinois S."/>
            <person name="Lauber J."/>
            <person name="Lazarevic V."/>
            <person name="Lee S.-M."/>
            <person name="Levine A."/>
            <person name="Liu H."/>
            <person name="Masuda S."/>
            <person name="Mauel C."/>
            <person name="Medigue C."/>
            <person name="Medina N."/>
            <person name="Mellado R.P."/>
            <person name="Mizuno M."/>
            <person name="Moestl D."/>
            <person name="Nakai S."/>
            <person name="Noback M."/>
            <person name="Noone D."/>
            <person name="O'Reilly M."/>
            <person name="Ogawa K."/>
            <person name="Ogiwara A."/>
            <person name="Oudega B."/>
            <person name="Park S.-H."/>
            <person name="Parro V."/>
            <person name="Pohl T.M."/>
            <person name="Portetelle D."/>
            <person name="Porwollik S."/>
            <person name="Prescott A.M."/>
            <person name="Presecan E."/>
            <person name="Pujic P."/>
            <person name="Purnelle B."/>
            <person name="Rapoport G."/>
            <person name="Rey M."/>
            <person name="Reynolds S."/>
            <person name="Rieger M."/>
            <person name="Rivolta C."/>
            <person name="Rocha E."/>
            <person name="Roche B."/>
            <person name="Rose M."/>
            <person name="Sadaie Y."/>
            <person name="Sato T."/>
            <person name="Scanlan E."/>
            <person name="Schleich S."/>
            <person name="Schroeter R."/>
            <person name="Scoffone F."/>
            <person name="Sekiguchi J."/>
            <person name="Sekowska A."/>
            <person name="Seror S.J."/>
            <person name="Serror P."/>
            <person name="Shin B.-S."/>
            <person name="Soldo B."/>
            <person name="Sorokin A."/>
            <person name="Tacconi E."/>
            <person name="Takagi T."/>
            <person name="Takahashi H."/>
            <person name="Takemaru K."/>
            <person name="Takeuchi M."/>
            <person name="Tamakoshi A."/>
            <person name="Tanaka T."/>
            <person name="Terpstra P."/>
            <person name="Tognoni A."/>
            <person name="Tosato V."/>
            <person name="Uchiyama S."/>
            <person name="Vandenbol M."/>
            <person name="Vannier F."/>
            <person name="Vassarotti A."/>
            <person name="Viari A."/>
            <person name="Wambutt R."/>
            <person name="Wedler E."/>
            <person name="Wedler H."/>
            <person name="Weitzenegger T."/>
            <person name="Winters P."/>
            <person name="Wipat A."/>
            <person name="Yamamoto H."/>
            <person name="Yamane K."/>
            <person name="Yasumoto K."/>
            <person name="Yata K."/>
            <person name="Yoshida K."/>
            <person name="Yoshikawa H.-F."/>
            <person name="Zumstein E."/>
            <person name="Yoshikawa H."/>
            <person name="Danchin A."/>
        </authorList>
    </citation>
    <scope>NUCLEOTIDE SEQUENCE [LARGE SCALE GENOMIC DNA]</scope>
    <source>
        <strain>168</strain>
    </source>
</reference>
<reference key="3">
    <citation type="submission" date="2005-01" db="PDB data bank">
        <title>Crystal structure of Bacillus subtilis yojF protein.</title>
        <authorList>
            <consortium name="Midwest center for structural genomics (MCSG)"/>
        </authorList>
    </citation>
    <scope>X-RAY CRYSTALLOGRAPHY (1.7 ANGSTROMS)</scope>
</reference>
<sequence>MKAIIKEDVQASLERYADRPVYIHLETTTGSYSAHLNEKNMTVVAYIRNAKVTYHQAKIKGNGPYRVGLKTEEGWIYAEGLTEYTVDEENRLLMAGHLPGGKLAISLQISEKPFTV</sequence>
<protein>
    <recommendedName>
        <fullName>Uncharacterized protein YojF</fullName>
    </recommendedName>
</protein>
<dbReference type="EMBL" id="AF026147">
    <property type="protein sequence ID" value="AAC17854.1"/>
    <property type="molecule type" value="Genomic_DNA"/>
</dbReference>
<dbReference type="EMBL" id="AL009126">
    <property type="protein sequence ID" value="CAB13839.1"/>
    <property type="molecule type" value="Genomic_DNA"/>
</dbReference>
<dbReference type="PIR" id="C69906">
    <property type="entry name" value="C69906"/>
</dbReference>
<dbReference type="RefSeq" id="NP_389829.1">
    <property type="nucleotide sequence ID" value="NC_000964.3"/>
</dbReference>
<dbReference type="RefSeq" id="WP_003231213.1">
    <property type="nucleotide sequence ID" value="NZ_OZ025638.1"/>
</dbReference>
<dbReference type="PDB" id="1NJH">
    <property type="method" value="X-ray"/>
    <property type="resolution" value="1.70 A"/>
    <property type="chains" value="A=1-116"/>
</dbReference>
<dbReference type="PDBsum" id="1NJH"/>
<dbReference type="SMR" id="O31858"/>
<dbReference type="FunCoup" id="O31858">
    <property type="interactions" value="65"/>
</dbReference>
<dbReference type="STRING" id="224308.BSU19470"/>
<dbReference type="PaxDb" id="224308-BSU19470"/>
<dbReference type="EnsemblBacteria" id="CAB13839">
    <property type="protein sequence ID" value="CAB13839"/>
    <property type="gene ID" value="BSU_19470"/>
</dbReference>
<dbReference type="GeneID" id="939590"/>
<dbReference type="KEGG" id="bsu:BSU19470"/>
<dbReference type="PATRIC" id="fig|224308.179.peg.2129"/>
<dbReference type="eggNOG" id="COG2120">
    <property type="taxonomic scope" value="Bacteria"/>
</dbReference>
<dbReference type="InParanoid" id="O31858"/>
<dbReference type="OrthoDB" id="2352913at2"/>
<dbReference type="PhylomeDB" id="O31858"/>
<dbReference type="BioCyc" id="BSUB:BSU19470-MONOMER"/>
<dbReference type="EvolutionaryTrace" id="O31858"/>
<dbReference type="Proteomes" id="UP000001570">
    <property type="component" value="Chromosome"/>
</dbReference>
<dbReference type="Gene3D" id="2.70.180.10">
    <property type="entry name" value="Hypothetical protein YojF"/>
    <property type="match status" value="1"/>
</dbReference>
<dbReference type="InterPro" id="IPR014934">
    <property type="entry name" value="DUF1806"/>
</dbReference>
<dbReference type="InterPro" id="IPR036492">
    <property type="entry name" value="YojF_sf"/>
</dbReference>
<dbReference type="Pfam" id="PF08830">
    <property type="entry name" value="DUF1806"/>
    <property type="match status" value="1"/>
</dbReference>
<dbReference type="SUPFAM" id="SSF89442">
    <property type="entry name" value="Hypothetical protein YojF"/>
    <property type="match status" value="1"/>
</dbReference>